<accession>Q1GE19</accession>
<feature type="signal peptide" evidence="1">
    <location>
        <begin position="1"/>
        <end position="23"/>
    </location>
</feature>
<feature type="chain" id="PRO_0000259091" description="Tol-Pal system protein TolB" evidence="1">
    <location>
        <begin position="24"/>
        <end position="441"/>
    </location>
</feature>
<feature type="region of interest" description="Disordered" evidence="2">
    <location>
        <begin position="420"/>
        <end position="441"/>
    </location>
</feature>
<organism>
    <name type="scientific">Ruegeria sp. (strain TM1040)</name>
    <name type="common">Silicibacter sp.</name>
    <dbReference type="NCBI Taxonomy" id="292414"/>
    <lineage>
        <taxon>Bacteria</taxon>
        <taxon>Pseudomonadati</taxon>
        <taxon>Pseudomonadota</taxon>
        <taxon>Alphaproteobacteria</taxon>
        <taxon>Rhodobacterales</taxon>
        <taxon>Roseobacteraceae</taxon>
        <taxon>Ruegeria</taxon>
    </lineage>
</organism>
<evidence type="ECO:0000255" key="1">
    <source>
        <dbReference type="HAMAP-Rule" id="MF_00671"/>
    </source>
</evidence>
<evidence type="ECO:0000256" key="2">
    <source>
        <dbReference type="SAM" id="MobiDB-lite"/>
    </source>
</evidence>
<protein>
    <recommendedName>
        <fullName evidence="1">Tol-Pal system protein TolB</fullName>
    </recommendedName>
</protein>
<proteinExistence type="inferred from homology"/>
<comment type="function">
    <text evidence="1">Part of the Tol-Pal system, which plays a role in outer membrane invagination during cell division and is important for maintaining outer membrane integrity.</text>
</comment>
<comment type="subunit">
    <text evidence="1">The Tol-Pal system is composed of five core proteins: the inner membrane proteins TolA, TolQ and TolR, the periplasmic protein TolB and the outer membrane protein Pal. They form a network linking the inner and outer membranes and the peptidoglycan layer.</text>
</comment>
<comment type="subcellular location">
    <subcellularLocation>
        <location evidence="1">Periplasm</location>
    </subcellularLocation>
</comment>
<comment type="similarity">
    <text evidence="1">Belongs to the TolB family.</text>
</comment>
<gene>
    <name evidence="1" type="primary">tolB</name>
    <name type="ordered locus">TM1040_2365</name>
</gene>
<keyword id="KW-0131">Cell cycle</keyword>
<keyword id="KW-0132">Cell division</keyword>
<keyword id="KW-0574">Periplasm</keyword>
<keyword id="KW-1185">Reference proteome</keyword>
<keyword id="KW-0732">Signal</keyword>
<dbReference type="EMBL" id="CP000377">
    <property type="protein sequence ID" value="ABF65097.1"/>
    <property type="molecule type" value="Genomic_DNA"/>
</dbReference>
<dbReference type="RefSeq" id="WP_011539685.1">
    <property type="nucleotide sequence ID" value="NC_008044.1"/>
</dbReference>
<dbReference type="SMR" id="Q1GE19"/>
<dbReference type="STRING" id="292414.TM1040_2365"/>
<dbReference type="KEGG" id="sit:TM1040_2365"/>
<dbReference type="eggNOG" id="COG0823">
    <property type="taxonomic scope" value="Bacteria"/>
</dbReference>
<dbReference type="HOGENOM" id="CLU_047123_0_0_5"/>
<dbReference type="OrthoDB" id="9802240at2"/>
<dbReference type="Proteomes" id="UP000000636">
    <property type="component" value="Chromosome"/>
</dbReference>
<dbReference type="GO" id="GO:0042597">
    <property type="term" value="C:periplasmic space"/>
    <property type="evidence" value="ECO:0007669"/>
    <property type="project" value="UniProtKB-SubCell"/>
</dbReference>
<dbReference type="GO" id="GO:0051301">
    <property type="term" value="P:cell division"/>
    <property type="evidence" value="ECO:0007669"/>
    <property type="project" value="UniProtKB-UniRule"/>
</dbReference>
<dbReference type="GO" id="GO:0017038">
    <property type="term" value="P:protein import"/>
    <property type="evidence" value="ECO:0007669"/>
    <property type="project" value="InterPro"/>
</dbReference>
<dbReference type="Gene3D" id="2.120.10.30">
    <property type="entry name" value="TolB, C-terminal domain"/>
    <property type="match status" value="1"/>
</dbReference>
<dbReference type="Gene3D" id="3.40.50.10070">
    <property type="entry name" value="TolB, N-terminal domain"/>
    <property type="match status" value="1"/>
</dbReference>
<dbReference type="HAMAP" id="MF_00671">
    <property type="entry name" value="TolB"/>
    <property type="match status" value="1"/>
</dbReference>
<dbReference type="InterPro" id="IPR011042">
    <property type="entry name" value="6-blade_b-propeller_TolB-like"/>
</dbReference>
<dbReference type="InterPro" id="IPR011659">
    <property type="entry name" value="PD40"/>
</dbReference>
<dbReference type="InterPro" id="IPR014167">
    <property type="entry name" value="Tol-Pal_TolB"/>
</dbReference>
<dbReference type="InterPro" id="IPR007195">
    <property type="entry name" value="TolB_N"/>
</dbReference>
<dbReference type="NCBIfam" id="TIGR02800">
    <property type="entry name" value="propeller_TolB"/>
    <property type="match status" value="1"/>
</dbReference>
<dbReference type="PANTHER" id="PTHR36842:SF1">
    <property type="entry name" value="PROTEIN TOLB"/>
    <property type="match status" value="1"/>
</dbReference>
<dbReference type="PANTHER" id="PTHR36842">
    <property type="entry name" value="PROTEIN TOLB HOMOLOG"/>
    <property type="match status" value="1"/>
</dbReference>
<dbReference type="Pfam" id="PF07676">
    <property type="entry name" value="PD40"/>
    <property type="match status" value="5"/>
</dbReference>
<dbReference type="Pfam" id="PF04052">
    <property type="entry name" value="TolB_N"/>
    <property type="match status" value="1"/>
</dbReference>
<dbReference type="SUPFAM" id="SSF52964">
    <property type="entry name" value="TolB, N-terminal domain"/>
    <property type="match status" value="1"/>
</dbReference>
<dbReference type="SUPFAM" id="SSF69304">
    <property type="entry name" value="Tricorn protease N-terminal domain"/>
    <property type="match status" value="1"/>
</dbReference>
<name>TOLB_RUEST</name>
<reference key="1">
    <citation type="submission" date="2006-05" db="EMBL/GenBank/DDBJ databases">
        <title>Complete sequence of chromosome of Silicibacter sp. TM1040.</title>
        <authorList>
            <consortium name="US DOE Joint Genome Institute"/>
            <person name="Copeland A."/>
            <person name="Lucas S."/>
            <person name="Lapidus A."/>
            <person name="Barry K."/>
            <person name="Detter J.C."/>
            <person name="Glavina del Rio T."/>
            <person name="Hammon N."/>
            <person name="Israni S."/>
            <person name="Dalin E."/>
            <person name="Tice H."/>
            <person name="Pitluck S."/>
            <person name="Brettin T."/>
            <person name="Bruce D."/>
            <person name="Han C."/>
            <person name="Tapia R."/>
            <person name="Goodwin L."/>
            <person name="Thompson L.S."/>
            <person name="Gilna P."/>
            <person name="Schmutz J."/>
            <person name="Larimer F."/>
            <person name="Land M."/>
            <person name="Hauser L."/>
            <person name="Kyrpides N."/>
            <person name="Kim E."/>
            <person name="Belas R."/>
            <person name="Moran M.A."/>
            <person name="Buchan A."/>
            <person name="Gonzalez J.M."/>
            <person name="Schell M.A."/>
            <person name="Sun F."/>
            <person name="Richardson P."/>
        </authorList>
    </citation>
    <scope>NUCLEOTIDE SEQUENCE [LARGE SCALE GENOMIC DNA]</scope>
    <source>
        <strain>TM1040</strain>
    </source>
</reference>
<sequence>MRNAIATVLLGLAMLLPVGAVQAQDGPLRIEITDGVIEPLPFAVPDFIADTPAAAQYATDIARVIAQDLVGSGLFREIPKVAYISPYTDFDAEVNFTDWKAINAQALIAGAVSLSGDRITVRFRGYDVFAGQELGAGLQLSGTTDGWRRIAHKVADTIYSRLTGEGGYFDSRVVFVSETGPKNDRKKRLAIMDYDGANVQYLTNSDAIVLAPRFSPTGDRVLYTSYESGFPQIHVLDVGRVQRRVLSAGNGSMSFAPRFAPNGQTIVYSQSQGGNTDLFSMDINSGNPQRLTSAPSIETAPSFSPDGSQIVFESDRSGTSQLYVMSASGGEAKRISFGQGRYGTPVWSPRGDYIAFTKQNAGRFHIGVMRTDGSEERLLTASFLDEGPTWSPNGRVIMFTRETQGASGQARLYSVDISGRNLKPVKTPDGASDPSWSPLQN</sequence>